<sequence>MAHTQRQQGGSRGQWSRCLLLLLLLPLAAQPGRAAIQIPSSYYISDLKIPPAITTQPESVTVFSVEDLVMRCEASGNPSPTFHWTKDGEEFDPSSDPEMKVTEEAGSSVFYTLSNTMDTLKQYQGKYICYASNELGTAVSNAAVLMIDAPPVQQKEKKVTEKAEAGHSIALSCNPPQSSMQPIIHWMDNRLRHIRLSDRVMVGKDGNLYFANLLTEDSRNDYTCNIQYLATRTILAKEPITLTVNPSNLVPRNRRPQMMRPTGSHSTYHALRGQTLELECIVQGLPTPKVSWLRKDGEMSESRISKDMFDRRLQFTNISESDGGEYQCTAENVQGRTFHTYTVTVEASPYWTNAPVSQLYAPGETVKLDCQADGIPSPTITWTVNGVPLSATSLEPRRSLTESGSLILKDVIFGDTAIYQCQASNKHGTILANTNVYVIELPPQILTENGNTYTFVEGQKALLECETFGSPKPKVTWESSSISLLLADPRVNLLTNGGLEIANVSHDDEGIYTCLVQGSNISVNAEVEVLNRTVILSPPQALRLQPGKTAIFTCLYVTDPKLSSPLLQWRKNDQKIFESHSDKKYTFDGPGLIISNVEPGDEGVYTCQIITKLDMVEASSTLTLCDRPDPPVHLQVTNAKHRVVTLNWTPGDDNNSPILEYVVEFEDQDMKENGWEELKRVAADKKHVNLPLWPYMSYRFRVIAINDQGKSDPSKLSDLYKTPADAPDSNPEDVRSESTDPDTLVITWEEMDKRNFNGPDFKYLVMWRRVVGSGPDWHEEYTIAPPFIVTDVQNFSAFEIKVQAVNKKGLGPEPDPIIGYSGEDVPLEAPLNLGVLLENSTTIRVTWSAVDKETVRGHLLGYKIYLTWGHHRNSRAQEPENIVMVQTGANEEKKSITNLRPYCHYDLAISAFNSKGEGPLSEKTSFMTPEGVPGPPMSMQMTSPSESEITLHWTPPSKPNGILLGYSLQYRKMQSDDNPLQVVDIASPEITHLTLKGLDRHSHYQFLLMARTAAGKGLSIEILGATTLEGLPPANISLSAEERSVNLSWEARKRHRTVGFQIHYFSKNGTKNGGKWKKTEMVNSSLQFFQLQGLTPGSHYRLLFTYKNNTFWETEIQTKGTSVTEVQPSFATQGWFIGVVSAVVLLLLVLLILCFIKRSKGGKYSVKDKEDGPMDSEARPMKDETFGEYRSLESDLEEKRTASQPSLGEDSKLCSEDNLDFNGSSAVTTELNMDESLASQFSRHSEGPEPFHGVPDNSPLNPAANPPATNGAPSFLN</sequence>
<protein>
    <recommendedName>
        <fullName>Neural cell adhesion molecule L1</fullName>
        <shortName>N-CAM-L1</shortName>
        <shortName>NCAM-L1</shortName>
    </recommendedName>
    <alternativeName>
        <fullName>L1-CAM</fullName>
    </alternativeName>
</protein>
<feature type="signal peptide" evidence="3">
    <location>
        <begin position="1"/>
        <end position="34"/>
    </location>
</feature>
<feature type="chain" id="PRO_0000015025" description="Neural cell adhesion molecule L1">
    <location>
        <begin position="35"/>
        <end position="1277"/>
    </location>
</feature>
<feature type="topological domain" description="Extracellular" evidence="3">
    <location>
        <begin position="35"/>
        <end position="1135"/>
    </location>
</feature>
<feature type="transmembrane region" description="Helical" evidence="3">
    <location>
        <begin position="1136"/>
        <end position="1156"/>
    </location>
</feature>
<feature type="topological domain" description="Cytoplasmic" evidence="3">
    <location>
        <begin position="1157"/>
        <end position="1277"/>
    </location>
</feature>
<feature type="domain" description="Ig-like C2-type 1">
    <location>
        <begin position="51"/>
        <end position="140"/>
    </location>
</feature>
<feature type="domain" description="Ig-like C2-type 2">
    <location>
        <begin position="150"/>
        <end position="241"/>
    </location>
</feature>
<feature type="domain" description="Ig-like C2-type 3">
    <location>
        <begin position="256"/>
        <end position="344"/>
    </location>
</feature>
<feature type="domain" description="Ig-like C2-type 4">
    <location>
        <begin position="349"/>
        <end position="437"/>
    </location>
</feature>
<feature type="domain" description="Ig-like C2-type 5">
    <location>
        <begin position="443"/>
        <end position="528"/>
    </location>
</feature>
<feature type="domain" description="Ig-like C2-type 6">
    <location>
        <begin position="532"/>
        <end position="623"/>
    </location>
</feature>
<feature type="domain" description="Fibronectin type-III 1" evidence="5">
    <location>
        <begin position="630"/>
        <end position="725"/>
    </location>
</feature>
<feature type="domain" description="Fibronectin type-III 2" evidence="5">
    <location>
        <begin position="730"/>
        <end position="824"/>
    </location>
</feature>
<feature type="domain" description="Fibronectin type-III 3" evidence="5">
    <location>
        <begin position="829"/>
        <end position="931"/>
    </location>
</feature>
<feature type="domain" description="Fibronectin type-III 4" evidence="5">
    <location>
        <begin position="935"/>
        <end position="1030"/>
    </location>
</feature>
<feature type="domain" description="Fibronectin type-III 5" evidence="5">
    <location>
        <begin position="1032"/>
        <end position="1129"/>
    </location>
</feature>
<feature type="region of interest" description="Disordered" evidence="6">
    <location>
        <begin position="714"/>
        <end position="740"/>
    </location>
</feature>
<feature type="region of interest" description="Disordered" evidence="6">
    <location>
        <begin position="1163"/>
        <end position="1216"/>
    </location>
</feature>
<feature type="region of interest" description="Disordered" evidence="6">
    <location>
        <begin position="1232"/>
        <end position="1277"/>
    </location>
</feature>
<feature type="compositionally biased region" description="Basic and acidic residues" evidence="6">
    <location>
        <begin position="1165"/>
        <end position="1201"/>
    </location>
</feature>
<feature type="compositionally biased region" description="Polar residues" evidence="6">
    <location>
        <begin position="1232"/>
        <end position="1242"/>
    </location>
</feature>
<feature type="compositionally biased region" description="Low complexity" evidence="6">
    <location>
        <begin position="1255"/>
        <end position="1277"/>
    </location>
</feature>
<feature type="glycosylation site" description="N-linked (GlcNAc...) asparagine" evidence="3">
    <location>
        <position position="317"/>
    </location>
</feature>
<feature type="glycosylation site" description="N-linked (GlcNAc...) asparagine" evidence="3">
    <location>
        <position position="503"/>
    </location>
</feature>
<feature type="glycosylation site" description="N-linked (GlcNAc...) asparagine" evidence="3">
    <location>
        <position position="520"/>
    </location>
</feature>
<feature type="glycosylation site" description="N-linked (GlcNAc...) asparagine" evidence="3">
    <location>
        <position position="531"/>
    </location>
</feature>
<feature type="glycosylation site" description="N-linked (GlcNAc...) asparagine" evidence="3">
    <location>
        <position position="794"/>
    </location>
</feature>
<feature type="glycosylation site" description="N-linked (GlcNAc...) asparagine" evidence="3">
    <location>
        <position position="839"/>
    </location>
</feature>
<feature type="glycosylation site" description="N-linked (GlcNAc...) asparagine" evidence="3">
    <location>
        <position position="1035"/>
    </location>
</feature>
<feature type="glycosylation site" description="N-linked (GlcNAc...) asparagine" evidence="3">
    <location>
        <position position="1046"/>
    </location>
</feature>
<feature type="glycosylation site" description="N-linked (GlcNAc...) asparagine" evidence="3">
    <location>
        <position position="1068"/>
    </location>
</feature>
<feature type="glycosylation site" description="N-linked (GlcNAc...) asparagine" evidence="3">
    <location>
        <position position="1083"/>
    </location>
</feature>
<feature type="glycosylation site" description="N-linked (GlcNAc...) asparagine" evidence="3">
    <location>
        <position position="1108"/>
    </location>
</feature>
<feature type="disulfide bond" evidence="4">
    <location>
        <begin position="72"/>
        <end position="129"/>
    </location>
</feature>
<feature type="disulfide bond" evidence="4">
    <location>
        <begin position="173"/>
        <end position="224"/>
    </location>
</feature>
<feature type="disulfide bond" evidence="4">
    <location>
        <begin position="280"/>
        <end position="328"/>
    </location>
</feature>
<feature type="disulfide bond" evidence="4">
    <location>
        <begin position="370"/>
        <end position="421"/>
    </location>
</feature>
<feature type="disulfide bond" evidence="4">
    <location>
        <begin position="465"/>
        <end position="514"/>
    </location>
</feature>
<feature type="disulfide bond" evidence="4">
    <location>
        <begin position="554"/>
        <end position="607"/>
    </location>
</feature>
<feature type="splice variant" id="VSP_050474" description="In isoform 2." evidence="8">
    <original>YYISDL</original>
    <variation>F</variation>
    <location>
        <begin position="42"/>
        <end position="47"/>
    </location>
</feature>
<feature type="splice variant" id="VSP_050475" description="In isoform 2." evidence="8">
    <location>
        <begin position="1190"/>
        <end position="1193"/>
    </location>
</feature>
<organism>
    <name type="scientific">Takifugu rubripes</name>
    <name type="common">Japanese pufferfish</name>
    <name type="synonym">Fugu rubripes</name>
    <dbReference type="NCBI Taxonomy" id="31033"/>
    <lineage>
        <taxon>Eukaryota</taxon>
        <taxon>Metazoa</taxon>
        <taxon>Chordata</taxon>
        <taxon>Craniata</taxon>
        <taxon>Vertebrata</taxon>
        <taxon>Euteleostomi</taxon>
        <taxon>Actinopterygii</taxon>
        <taxon>Neopterygii</taxon>
        <taxon>Teleostei</taxon>
        <taxon>Neoteleostei</taxon>
        <taxon>Acanthomorphata</taxon>
        <taxon>Eupercaria</taxon>
        <taxon>Tetraodontiformes</taxon>
        <taxon>Tetradontoidea</taxon>
        <taxon>Tetraodontidae</taxon>
        <taxon>Takifugu</taxon>
    </lineage>
</organism>
<accession>Q98902</accession>
<gene>
    <name type="primary">l1cam</name>
</gene>
<dbReference type="EMBL" id="Z71926">
    <property type="protein sequence ID" value="CAA96469.1"/>
    <property type="molecule type" value="Genomic_DNA"/>
</dbReference>
<dbReference type="EMBL" id="AF026198">
    <property type="protein sequence ID" value="AAC15580.1"/>
    <property type="molecule type" value="Genomic_DNA"/>
</dbReference>
<dbReference type="PIR" id="T30532">
    <property type="entry name" value="T30532"/>
</dbReference>
<dbReference type="SMR" id="Q98902"/>
<dbReference type="FunCoup" id="Q98902">
    <property type="interactions" value="78"/>
</dbReference>
<dbReference type="STRING" id="31033.ENSTRUP00000079417"/>
<dbReference type="GlyCosmos" id="Q98902">
    <property type="glycosylation" value="11 sites, No reported glycans"/>
</dbReference>
<dbReference type="eggNOG" id="KOG3513">
    <property type="taxonomic scope" value="Eukaryota"/>
</dbReference>
<dbReference type="InParanoid" id="Q98902"/>
<dbReference type="Proteomes" id="UP000005226">
    <property type="component" value="Unplaced"/>
</dbReference>
<dbReference type="GO" id="GO:0044295">
    <property type="term" value="C:axonal growth cone"/>
    <property type="evidence" value="ECO:0000250"/>
    <property type="project" value="UniProtKB"/>
</dbReference>
<dbReference type="GO" id="GO:0005886">
    <property type="term" value="C:plasma membrane"/>
    <property type="evidence" value="ECO:0007669"/>
    <property type="project" value="UniProtKB-SubCell"/>
</dbReference>
<dbReference type="GO" id="GO:0098632">
    <property type="term" value="F:cell-cell adhesion mediator activity"/>
    <property type="evidence" value="ECO:0007669"/>
    <property type="project" value="TreeGrafter"/>
</dbReference>
<dbReference type="GO" id="GO:0007411">
    <property type="term" value="P:axon guidance"/>
    <property type="evidence" value="ECO:0007669"/>
    <property type="project" value="TreeGrafter"/>
</dbReference>
<dbReference type="GO" id="GO:0007420">
    <property type="term" value="P:brain development"/>
    <property type="evidence" value="ECO:0007669"/>
    <property type="project" value="TreeGrafter"/>
</dbReference>
<dbReference type="GO" id="GO:0045773">
    <property type="term" value="P:positive regulation of axon extension"/>
    <property type="evidence" value="ECO:0000250"/>
    <property type="project" value="UniProtKB"/>
</dbReference>
<dbReference type="CDD" id="cd00063">
    <property type="entry name" value="FN3"/>
    <property type="match status" value="5"/>
</dbReference>
<dbReference type="CDD" id="cd00096">
    <property type="entry name" value="Ig"/>
    <property type="match status" value="1"/>
</dbReference>
<dbReference type="FunFam" id="2.60.40.10:FF:002563">
    <property type="entry name" value="Neural cell adhesion molecule L1"/>
    <property type="match status" value="1"/>
</dbReference>
<dbReference type="FunFam" id="2.60.40.10:FF:002813">
    <property type="entry name" value="Neural cell adhesion molecule L1"/>
    <property type="match status" value="1"/>
</dbReference>
<dbReference type="FunFam" id="2.60.40.10:FF:000057">
    <property type="entry name" value="neural cell adhesion molecule L1"/>
    <property type="match status" value="1"/>
</dbReference>
<dbReference type="FunFam" id="2.60.40.10:FF:000367">
    <property type="entry name" value="Neural cell adhesion molecule L1-like protein"/>
    <property type="match status" value="1"/>
</dbReference>
<dbReference type="FunFam" id="2.60.40.10:FF:000005">
    <property type="entry name" value="Neuronal cell adhesion molecule"/>
    <property type="match status" value="1"/>
</dbReference>
<dbReference type="FunFam" id="2.60.40.10:FF:000028">
    <property type="entry name" value="Neuronal cell adhesion molecule"/>
    <property type="match status" value="1"/>
</dbReference>
<dbReference type="FunFam" id="2.60.40.10:FF:000078">
    <property type="entry name" value="Neuronal cell adhesion molecule"/>
    <property type="match status" value="1"/>
</dbReference>
<dbReference type="FunFam" id="2.60.40.10:FF:000347">
    <property type="entry name" value="Neuronal cell adhesion molecule"/>
    <property type="match status" value="1"/>
</dbReference>
<dbReference type="FunFam" id="2.60.40.10:FF:000032">
    <property type="entry name" value="palladin isoform X1"/>
    <property type="match status" value="1"/>
</dbReference>
<dbReference type="Gene3D" id="2.60.40.10">
    <property type="entry name" value="Immunoglobulins"/>
    <property type="match status" value="11"/>
</dbReference>
<dbReference type="InterPro" id="IPR003961">
    <property type="entry name" value="FN3_dom"/>
</dbReference>
<dbReference type="InterPro" id="IPR036116">
    <property type="entry name" value="FN3_sf"/>
</dbReference>
<dbReference type="InterPro" id="IPR007110">
    <property type="entry name" value="Ig-like_dom"/>
</dbReference>
<dbReference type="InterPro" id="IPR036179">
    <property type="entry name" value="Ig-like_dom_sf"/>
</dbReference>
<dbReference type="InterPro" id="IPR013783">
    <property type="entry name" value="Ig-like_fold"/>
</dbReference>
<dbReference type="InterPro" id="IPR013098">
    <property type="entry name" value="Ig_I-set"/>
</dbReference>
<dbReference type="InterPro" id="IPR003599">
    <property type="entry name" value="Ig_sub"/>
</dbReference>
<dbReference type="InterPro" id="IPR003598">
    <property type="entry name" value="Ig_sub2"/>
</dbReference>
<dbReference type="InterPro" id="IPR026966">
    <property type="entry name" value="Neurofascin/L1/NrCAM_C"/>
</dbReference>
<dbReference type="PANTHER" id="PTHR44170:SF36">
    <property type="entry name" value="L1 CELL ADHESION MOLECULE"/>
    <property type="match status" value="1"/>
</dbReference>
<dbReference type="PANTHER" id="PTHR44170">
    <property type="entry name" value="PROTEIN SIDEKICK"/>
    <property type="match status" value="1"/>
</dbReference>
<dbReference type="Pfam" id="PF13882">
    <property type="entry name" value="Bravo_FIGEY"/>
    <property type="match status" value="1"/>
</dbReference>
<dbReference type="Pfam" id="PF00041">
    <property type="entry name" value="fn3"/>
    <property type="match status" value="3"/>
</dbReference>
<dbReference type="Pfam" id="PF07679">
    <property type="entry name" value="I-set"/>
    <property type="match status" value="2"/>
</dbReference>
<dbReference type="Pfam" id="PF13927">
    <property type="entry name" value="Ig_3"/>
    <property type="match status" value="3"/>
</dbReference>
<dbReference type="SMART" id="SM00060">
    <property type="entry name" value="FN3"/>
    <property type="match status" value="5"/>
</dbReference>
<dbReference type="SMART" id="SM00409">
    <property type="entry name" value="IG"/>
    <property type="match status" value="6"/>
</dbReference>
<dbReference type="SMART" id="SM00408">
    <property type="entry name" value="IGc2"/>
    <property type="match status" value="5"/>
</dbReference>
<dbReference type="SUPFAM" id="SSF49265">
    <property type="entry name" value="Fibronectin type III"/>
    <property type="match status" value="3"/>
</dbReference>
<dbReference type="SUPFAM" id="SSF48726">
    <property type="entry name" value="Immunoglobulin"/>
    <property type="match status" value="6"/>
</dbReference>
<dbReference type="PROSITE" id="PS50853">
    <property type="entry name" value="FN3"/>
    <property type="match status" value="5"/>
</dbReference>
<dbReference type="PROSITE" id="PS50835">
    <property type="entry name" value="IG_LIKE"/>
    <property type="match status" value="6"/>
</dbReference>
<keyword id="KW-0025">Alternative splicing</keyword>
<keyword id="KW-0130">Cell adhesion</keyword>
<keyword id="KW-1003">Cell membrane</keyword>
<keyword id="KW-0966">Cell projection</keyword>
<keyword id="KW-1015">Disulfide bond</keyword>
<keyword id="KW-0325">Glycoprotein</keyword>
<keyword id="KW-0393">Immunoglobulin domain</keyword>
<keyword id="KW-0472">Membrane</keyword>
<keyword id="KW-1185">Reference proteome</keyword>
<keyword id="KW-0677">Repeat</keyword>
<keyword id="KW-0732">Signal</keyword>
<keyword id="KW-0812">Transmembrane</keyword>
<keyword id="KW-1133">Transmembrane helix</keyword>
<name>L1CAM_TAKRU</name>
<reference evidence="9" key="1">
    <citation type="journal article" date="1998" name="Gene">
        <title>The neural cell adhesion molecule L1: genomic organisation and differential splicing is conserved between man and the pufferfish Fugu.</title>
        <authorList>
            <person name="Coutelle O."/>
            <person name="Nyakatura G."/>
            <person name="Taudien S."/>
            <person name="Elgar G."/>
            <person name="Brenner S."/>
            <person name="Platzer M."/>
            <person name="Drescher B."/>
            <person name="Jouet M."/>
            <person name="Kenwrick S."/>
            <person name="Rosenthal A."/>
        </authorList>
    </citation>
    <scope>NUCLEOTIDE SEQUENCE [GENOMIC DNA] (ISOFORMS 1 AND 2)</scope>
    <source>
        <tissue evidence="7">Brain</tissue>
        <tissue evidence="7">Muscle</tissue>
    </source>
</reference>
<evidence type="ECO:0000250" key="1">
    <source>
        <dbReference type="UniProtKB" id="P32004"/>
    </source>
</evidence>
<evidence type="ECO:0000250" key="2">
    <source>
        <dbReference type="UniProtKB" id="Q05695"/>
    </source>
</evidence>
<evidence type="ECO:0000255" key="3"/>
<evidence type="ECO:0000255" key="4">
    <source>
        <dbReference type="PROSITE-ProRule" id="PRU00114"/>
    </source>
</evidence>
<evidence type="ECO:0000255" key="5">
    <source>
        <dbReference type="PROSITE-ProRule" id="PRU00316"/>
    </source>
</evidence>
<evidence type="ECO:0000256" key="6">
    <source>
        <dbReference type="SAM" id="MobiDB-lite"/>
    </source>
</evidence>
<evidence type="ECO:0000269" key="7">
    <source>
    </source>
</evidence>
<evidence type="ECO:0000303" key="8">
    <source>
    </source>
</evidence>
<evidence type="ECO:0000305" key="9"/>
<proteinExistence type="inferred from homology"/>
<comment type="function">
    <text evidence="1">Neural cell adhesion molecule involved in the dynamics of cell adhesion and in the generation of transmembrane signals at tyrosine kinase receptors. During brain development, critical in multiple processes, including neuronal migration, axonal growth and fasciculation, and synaptogenesis. In the mature brain, plays a role in the dynamics of neuronal structure and function, including synaptic plasticity.</text>
</comment>
<comment type="subcellular location">
    <subcellularLocation>
        <location evidence="2">Cell membrane</location>
        <topology evidence="2">Single-pass type I membrane protein</topology>
    </subcellularLocation>
    <subcellularLocation>
        <location evidence="2">Cell projection</location>
        <location evidence="2">Growth cone</location>
    </subcellularLocation>
</comment>
<comment type="alternative products">
    <event type="alternative splicing"/>
    <isoform>
        <id>Q98902-1</id>
        <name evidence="7">1</name>
        <name evidence="7">Brain</name>
        <sequence type="displayed"/>
    </isoform>
    <isoform>
        <id>Q98902-2</id>
        <name evidence="7">2</name>
        <name evidence="7">Muscle</name>
        <sequence type="described" ref="VSP_050474 VSP_050475"/>
    </isoform>
</comment>
<comment type="similarity">
    <text evidence="9">Belongs to the immunoglobulin superfamily. L1/neurofascin/NgCAM family.</text>
</comment>